<comment type="function">
    <text evidence="1">Induces bone resorption, acting probably through a signaling cascade which results in the secretion of factor(s) enhancing osteoclast formation and activity.</text>
</comment>
<comment type="subcellular location">
    <subcellularLocation>
        <location evidence="1">Cytoplasm</location>
    </subcellularLocation>
</comment>
<comment type="tissue specificity">
    <text evidence="3">Ubiquitously expressed.</text>
</comment>
<name>OSTF1_MONAL</name>
<dbReference type="EMBL" id="AY230261">
    <property type="protein sequence ID" value="AAP55655.1"/>
    <property type="molecule type" value="mRNA"/>
</dbReference>
<dbReference type="RefSeq" id="XP_020449542.1">
    <property type="nucleotide sequence ID" value="XM_020593886.1"/>
</dbReference>
<dbReference type="SMR" id="Q6XJU9"/>
<dbReference type="STRING" id="43700.ENSMALP00000026580"/>
<dbReference type="Ensembl" id="ENSMALT00000027048.1">
    <property type="protein sequence ID" value="ENSMALP00000026563.1"/>
    <property type="gene ID" value="ENSMALG00000018408.1"/>
</dbReference>
<dbReference type="GeneID" id="109956615"/>
<dbReference type="OrthoDB" id="207120at2759"/>
<dbReference type="Proteomes" id="UP000261600">
    <property type="component" value="Unplaced"/>
</dbReference>
<dbReference type="GO" id="GO:0005737">
    <property type="term" value="C:cytoplasm"/>
    <property type="evidence" value="ECO:0007669"/>
    <property type="project" value="UniProtKB-SubCell"/>
</dbReference>
<dbReference type="GO" id="GO:0007165">
    <property type="term" value="P:signal transduction"/>
    <property type="evidence" value="ECO:0007669"/>
    <property type="project" value="TreeGrafter"/>
</dbReference>
<dbReference type="CDD" id="cd11772">
    <property type="entry name" value="SH3_OSTF1"/>
    <property type="match status" value="1"/>
</dbReference>
<dbReference type="FunFam" id="2.30.30.40:FF:000072">
    <property type="entry name" value="Unconventional Myosin IB"/>
    <property type="match status" value="1"/>
</dbReference>
<dbReference type="Gene3D" id="1.25.40.20">
    <property type="entry name" value="Ankyrin repeat-containing domain"/>
    <property type="match status" value="1"/>
</dbReference>
<dbReference type="Gene3D" id="2.30.30.40">
    <property type="entry name" value="SH3 Domains"/>
    <property type="match status" value="1"/>
</dbReference>
<dbReference type="InterPro" id="IPR002110">
    <property type="entry name" value="Ankyrin_rpt"/>
</dbReference>
<dbReference type="InterPro" id="IPR036770">
    <property type="entry name" value="Ankyrin_rpt-contain_sf"/>
</dbReference>
<dbReference type="InterPro" id="IPR036028">
    <property type="entry name" value="SH3-like_dom_sf"/>
</dbReference>
<dbReference type="InterPro" id="IPR001452">
    <property type="entry name" value="SH3_domain"/>
</dbReference>
<dbReference type="PANTHER" id="PTHR24155">
    <property type="entry name" value="OSTEOCLAST-STIMULATING FACTOR 1"/>
    <property type="match status" value="1"/>
</dbReference>
<dbReference type="PANTHER" id="PTHR24155:SF10">
    <property type="entry name" value="OSTEOCLAST-STIMULATING FACTOR 1"/>
    <property type="match status" value="1"/>
</dbReference>
<dbReference type="Pfam" id="PF12796">
    <property type="entry name" value="Ank_2"/>
    <property type="match status" value="1"/>
</dbReference>
<dbReference type="Pfam" id="PF13637">
    <property type="entry name" value="Ank_4"/>
    <property type="match status" value="1"/>
</dbReference>
<dbReference type="Pfam" id="PF00018">
    <property type="entry name" value="SH3_1"/>
    <property type="match status" value="1"/>
</dbReference>
<dbReference type="PRINTS" id="PR00499">
    <property type="entry name" value="P67PHOX"/>
</dbReference>
<dbReference type="PRINTS" id="PR00452">
    <property type="entry name" value="SH3DOMAIN"/>
</dbReference>
<dbReference type="SMART" id="SM00248">
    <property type="entry name" value="ANK"/>
    <property type="match status" value="3"/>
</dbReference>
<dbReference type="SMART" id="SM00326">
    <property type="entry name" value="SH3"/>
    <property type="match status" value="1"/>
</dbReference>
<dbReference type="SUPFAM" id="SSF48403">
    <property type="entry name" value="Ankyrin repeat"/>
    <property type="match status" value="1"/>
</dbReference>
<dbReference type="SUPFAM" id="SSF50044">
    <property type="entry name" value="SH3-domain"/>
    <property type="match status" value="1"/>
</dbReference>
<dbReference type="PROSITE" id="PS50297">
    <property type="entry name" value="ANK_REP_REGION"/>
    <property type="match status" value="1"/>
</dbReference>
<dbReference type="PROSITE" id="PS50088">
    <property type="entry name" value="ANK_REPEAT"/>
    <property type="match status" value="2"/>
</dbReference>
<dbReference type="PROSITE" id="PS50002">
    <property type="entry name" value="SH3"/>
    <property type="match status" value="1"/>
</dbReference>
<sequence>MSKPPPKPAKPGQVKVFRALFTFDPRTPDELYFEEGDILYISDTSDTNWWKGTCRGRTGLIPSNYVAEQAETIDHPMHEAAKRGNLSWLRECVENKVGINGLDKAGNTALYWACHGGHKDVVELLLNQPSVELNQQNKLGDTVLHAAAWKGYSDIVEMLLDKNARTDIRNNENKLALEMATNAQCASLLKRKQGTNVTRTLSNAEEYLDDDDSD</sequence>
<organism>
    <name type="scientific">Monopterus albus</name>
    <name type="common">Swamp eel</name>
    <dbReference type="NCBI Taxonomy" id="43700"/>
    <lineage>
        <taxon>Eukaryota</taxon>
        <taxon>Metazoa</taxon>
        <taxon>Chordata</taxon>
        <taxon>Craniata</taxon>
        <taxon>Vertebrata</taxon>
        <taxon>Euteleostomi</taxon>
        <taxon>Actinopterygii</taxon>
        <taxon>Neopterygii</taxon>
        <taxon>Teleostei</taxon>
        <taxon>Neoteleostei</taxon>
        <taxon>Acanthomorphata</taxon>
        <taxon>Anabantaria</taxon>
        <taxon>Synbranchiformes</taxon>
        <taxon>Synbranchidae</taxon>
        <taxon>Monopterus</taxon>
    </lineage>
</organism>
<proteinExistence type="evidence at transcript level"/>
<protein>
    <recommendedName>
        <fullName>Osteoclast-stimulating factor 1</fullName>
    </recommendedName>
    <alternativeName>
        <fullName>Osteoclast-stimulating factor-like</fullName>
    </alternativeName>
</protein>
<accession>Q6XJU9</accession>
<reference key="1">
    <citation type="journal article" date="2004" name="J. Exp. Zool. B Mol. Dev. Evol.">
        <title>Molecular cloning and expression of the osteoclast-stimulating-factor-like gene from the rice field eel.</title>
        <authorList>
            <person name="Xia L."/>
            <person name="Cheng H."/>
            <person name="Yu H."/>
            <person name="Guo Y."/>
            <person name="Zhou R."/>
        </authorList>
    </citation>
    <scope>NUCLEOTIDE SEQUENCE [MRNA]</scope>
    <scope>TISSUE SPECIFICITY</scope>
    <source>
        <tissue>Testis</tissue>
    </source>
</reference>
<keyword id="KW-0040">ANK repeat</keyword>
<keyword id="KW-0963">Cytoplasm</keyword>
<keyword id="KW-0677">Repeat</keyword>
<keyword id="KW-0728">SH3 domain</keyword>
<evidence type="ECO:0000250" key="1"/>
<evidence type="ECO:0000255" key="2">
    <source>
        <dbReference type="PROSITE-ProRule" id="PRU00192"/>
    </source>
</evidence>
<evidence type="ECO:0000269" key="3">
    <source>
    </source>
</evidence>
<feature type="chain" id="PRO_0000238959" description="Osteoclast-stimulating factor 1">
    <location>
        <begin position="1"/>
        <end position="214"/>
    </location>
</feature>
<feature type="domain" description="SH3" evidence="2">
    <location>
        <begin position="12"/>
        <end position="71"/>
    </location>
</feature>
<feature type="repeat" description="ANK 1">
    <location>
        <begin position="72"/>
        <end position="101"/>
    </location>
</feature>
<feature type="repeat" description="ANK 2">
    <location>
        <begin position="105"/>
        <end position="135"/>
    </location>
</feature>
<feature type="repeat" description="ANK 3">
    <location>
        <begin position="139"/>
        <end position="168"/>
    </location>
</feature>
<gene>
    <name type="primary">ostf1</name>
    <name type="synonym">osf</name>
</gene>